<comment type="function">
    <text evidence="1">Component of the Mediator complex, a coactivator involved in the regulated transcription of nearly all RNA polymerase II-dependent genes. Mediator functions as a bridge to convey information from gene-specific regulatory proteins to the basal RNA polymerase II transcription machinery. Mediator is recruited to promoters by direct interactions with regulatory proteins and serves as a scaffold for the assembly of a functional preinitiation complex with RNA polymerase II and the general transcription factors (By similarity).</text>
</comment>
<comment type="subunit">
    <text evidence="1">Component of the Mediator complex.</text>
</comment>
<comment type="subcellular location">
    <subcellularLocation>
        <location evidence="1">Nucleus</location>
    </subcellularLocation>
</comment>
<comment type="similarity">
    <text evidence="4">Belongs to the Mediator complex subunit 17 family.</text>
</comment>
<dbReference type="EMBL" id="AE016815">
    <property type="protein sequence ID" value="AAS50937.1"/>
    <property type="molecule type" value="Genomic_DNA"/>
</dbReference>
<dbReference type="RefSeq" id="NP_983113.1">
    <property type="nucleotide sequence ID" value="NM_208466.1"/>
</dbReference>
<dbReference type="SMR" id="Q75D58"/>
<dbReference type="FunCoup" id="Q75D58">
    <property type="interactions" value="189"/>
</dbReference>
<dbReference type="STRING" id="284811.Q75D58"/>
<dbReference type="EnsemblFungi" id="AAS50937">
    <property type="protein sequence ID" value="AAS50937"/>
    <property type="gene ID" value="AGOS_ABR165W"/>
</dbReference>
<dbReference type="GeneID" id="4619223"/>
<dbReference type="KEGG" id="ago:AGOS_ABR165W"/>
<dbReference type="eggNOG" id="ENOG502QS9H">
    <property type="taxonomic scope" value="Eukaryota"/>
</dbReference>
<dbReference type="HOGENOM" id="CLU_023188_0_0_1"/>
<dbReference type="InParanoid" id="Q75D58"/>
<dbReference type="OMA" id="PKINDKR"/>
<dbReference type="OrthoDB" id="5319830at2759"/>
<dbReference type="Proteomes" id="UP000000591">
    <property type="component" value="Chromosome II"/>
</dbReference>
<dbReference type="GO" id="GO:0070847">
    <property type="term" value="C:core mediator complex"/>
    <property type="evidence" value="ECO:0000318"/>
    <property type="project" value="GO_Central"/>
</dbReference>
<dbReference type="GO" id="GO:0016592">
    <property type="term" value="C:mediator complex"/>
    <property type="evidence" value="ECO:0000318"/>
    <property type="project" value="GO_Central"/>
</dbReference>
<dbReference type="GO" id="GO:0140297">
    <property type="term" value="F:DNA-binding transcription factor binding"/>
    <property type="evidence" value="ECO:0007669"/>
    <property type="project" value="EnsemblFungi"/>
</dbReference>
<dbReference type="GO" id="GO:0001139">
    <property type="term" value="F:RNA polymerase II complex recruiting activity"/>
    <property type="evidence" value="ECO:0007669"/>
    <property type="project" value="EnsemblFungi"/>
</dbReference>
<dbReference type="GO" id="GO:0000979">
    <property type="term" value="F:RNA polymerase II core promoter sequence-specific DNA binding"/>
    <property type="evidence" value="ECO:0007669"/>
    <property type="project" value="EnsemblFungi"/>
</dbReference>
<dbReference type="GO" id="GO:0003712">
    <property type="term" value="F:transcription coregulator activity"/>
    <property type="evidence" value="ECO:0000318"/>
    <property type="project" value="GO_Central"/>
</dbReference>
<dbReference type="GO" id="GO:0034605">
    <property type="term" value="P:cellular response to heat"/>
    <property type="evidence" value="ECO:0007669"/>
    <property type="project" value="EnsemblFungi"/>
</dbReference>
<dbReference type="GO" id="GO:0032968">
    <property type="term" value="P:positive regulation of transcription elongation by RNA polymerase II"/>
    <property type="evidence" value="ECO:0007669"/>
    <property type="project" value="EnsemblFungi"/>
</dbReference>
<dbReference type="GO" id="GO:0060261">
    <property type="term" value="P:positive regulation of transcription initiation by RNA polymerase II"/>
    <property type="evidence" value="ECO:0007669"/>
    <property type="project" value="EnsemblFungi"/>
</dbReference>
<dbReference type="GO" id="GO:0006357">
    <property type="term" value="P:regulation of transcription by RNA polymerase II"/>
    <property type="evidence" value="ECO:0000318"/>
    <property type="project" value="GO_Central"/>
</dbReference>
<dbReference type="Gene3D" id="6.10.250.2620">
    <property type="match status" value="1"/>
</dbReference>
<dbReference type="InterPro" id="IPR019313">
    <property type="entry name" value="Mediator_Med17"/>
</dbReference>
<dbReference type="PANTHER" id="PTHR13114">
    <property type="entry name" value="MEDIATOR OF RNA POLYMERASE II TRANSCRIPTION SUBUNIT 17"/>
    <property type="match status" value="1"/>
</dbReference>
<dbReference type="PANTHER" id="PTHR13114:SF7">
    <property type="entry name" value="MEDIATOR OF RNA POLYMERASE II TRANSCRIPTION SUBUNIT 17"/>
    <property type="match status" value="1"/>
</dbReference>
<dbReference type="Pfam" id="PF10156">
    <property type="entry name" value="Med17"/>
    <property type="match status" value="1"/>
</dbReference>
<evidence type="ECO:0000250" key="1"/>
<evidence type="ECO:0000255" key="2"/>
<evidence type="ECO:0000256" key="3">
    <source>
        <dbReference type="SAM" id="MobiDB-lite"/>
    </source>
</evidence>
<evidence type="ECO:0000305" key="4"/>
<organism>
    <name type="scientific">Eremothecium gossypii (strain ATCC 10895 / CBS 109.51 / FGSC 9923 / NRRL Y-1056)</name>
    <name type="common">Yeast</name>
    <name type="synonym">Ashbya gossypii</name>
    <dbReference type="NCBI Taxonomy" id="284811"/>
    <lineage>
        <taxon>Eukaryota</taxon>
        <taxon>Fungi</taxon>
        <taxon>Dikarya</taxon>
        <taxon>Ascomycota</taxon>
        <taxon>Saccharomycotina</taxon>
        <taxon>Saccharomycetes</taxon>
        <taxon>Saccharomycetales</taxon>
        <taxon>Saccharomycetaceae</taxon>
        <taxon>Eremothecium</taxon>
    </lineage>
</organism>
<keyword id="KW-0010">Activator</keyword>
<keyword id="KW-0175">Coiled coil</keyword>
<keyword id="KW-0539">Nucleus</keyword>
<keyword id="KW-1185">Reference proteome</keyword>
<keyword id="KW-0804">Transcription</keyword>
<keyword id="KW-0805">Transcription regulation</keyword>
<gene>
    <name type="primary">SRB4</name>
    <name type="synonym">MED17</name>
    <name type="ordered locus">ABR165W</name>
</gene>
<sequence length="639" mass="72164">MEPDDGHNSLNQDNGIPIVLDPNLINLRSRAASATVTTNGTTADSSEDSGSQQSVSSAPIQQNSEEHSLVSNPYETYGRMPLQKLIPLILQMRNASSFSELTEEDLLRDIEREEKGILTTGLDVEGDIEMGDADEESDLKPQEITDDDSNARLKPNNDSAIPQEEFNQMKREVLEHINLALNESSLSLEFISLLLSSVRPSVGVGSMSPFLKRSVPTASLNADKVELPPKNKTETLTLAVINRGWKLRSLEDSKALLKENYAKLQKSLEVEHAHWAMISQHISSTDVVFKMRDRQTGKRSLAVKYGYEDSGSLYKQDRGVAVLRHNMDLNKLELVPISNSKEEVHITANSVERFMRVHIYTKIEEEDDYILSGESSIDDQSLLQPCHDDISRQIARLKFFIFERELMYQLKKEAVSLMPYGVNFENENKVVLESPGERIEFEMVPLDDSALLSTHEPRRVNDKRANIILILLRMLLVVIHKKQLRRGLKPATSKHKYRADGDLLLLRPVLGRIRHRNYLQVVKRVVTECVLNIVPGSSIELLPQRSEPDTLHAREANIASLNKQIGLFDKILRMPRSELRTSLGAKGVIDLTLKSSNYCNAIIQVIYADSAGKTVFDTVFTELKELEEFLHFIVSEYVL</sequence>
<name>MED17_EREGS</name>
<accession>Q75D58</accession>
<protein>
    <recommendedName>
        <fullName>Mediator of RNA polymerase II transcription subunit 17</fullName>
    </recommendedName>
    <alternativeName>
        <fullName>Mediator complex subunit 17</fullName>
    </alternativeName>
</protein>
<reference key="1">
    <citation type="journal article" date="2004" name="Science">
        <title>The Ashbya gossypii genome as a tool for mapping the ancient Saccharomyces cerevisiae genome.</title>
        <authorList>
            <person name="Dietrich F.S."/>
            <person name="Voegeli S."/>
            <person name="Brachat S."/>
            <person name="Lerch A."/>
            <person name="Gates K."/>
            <person name="Steiner S."/>
            <person name="Mohr C."/>
            <person name="Poehlmann R."/>
            <person name="Luedi P."/>
            <person name="Choi S."/>
            <person name="Wing R.A."/>
            <person name="Flavier A."/>
            <person name="Gaffney T.D."/>
            <person name="Philippsen P."/>
        </authorList>
    </citation>
    <scope>NUCLEOTIDE SEQUENCE [LARGE SCALE GENOMIC DNA]</scope>
    <source>
        <strain>ATCC 10895 / CBS 109.51 / FGSC 9923 / NRRL Y-1056</strain>
    </source>
</reference>
<reference key="2">
    <citation type="journal article" date="2013" name="G3 (Bethesda)">
        <title>Genomes of Ashbya fungi isolated from insects reveal four mating-type loci, numerous translocations, lack of transposons, and distinct gene duplications.</title>
        <authorList>
            <person name="Dietrich F.S."/>
            <person name="Voegeli S."/>
            <person name="Kuo S."/>
            <person name="Philippsen P."/>
        </authorList>
    </citation>
    <scope>GENOME REANNOTATION</scope>
    <source>
        <strain>ATCC 10895 / CBS 109.51 / FGSC 9923 / NRRL Y-1056</strain>
    </source>
</reference>
<feature type="chain" id="PRO_0000304708" description="Mediator of RNA polymerase II transcription subunit 17">
    <location>
        <begin position="1"/>
        <end position="639"/>
    </location>
</feature>
<feature type="region of interest" description="Disordered" evidence="3">
    <location>
        <begin position="32"/>
        <end position="68"/>
    </location>
</feature>
<feature type="region of interest" description="Disordered" evidence="3">
    <location>
        <begin position="130"/>
        <end position="159"/>
    </location>
</feature>
<feature type="coiled-coil region" evidence="2">
    <location>
        <begin position="245"/>
        <end position="271"/>
    </location>
</feature>
<feature type="compositionally biased region" description="Polar residues" evidence="3">
    <location>
        <begin position="32"/>
        <end position="43"/>
    </location>
</feature>
<feature type="compositionally biased region" description="Low complexity" evidence="3">
    <location>
        <begin position="48"/>
        <end position="57"/>
    </location>
</feature>
<feature type="compositionally biased region" description="Polar residues" evidence="3">
    <location>
        <begin position="58"/>
        <end position="68"/>
    </location>
</feature>
<proteinExistence type="inferred from homology"/>